<accession>B7NM15</accession>
<feature type="chain" id="PRO_1000138157" description="Cell division inhibitor SulA">
    <location>
        <begin position="1"/>
        <end position="169"/>
    </location>
</feature>
<feature type="region of interest" description="FtsZ binding" evidence="1">
    <location>
        <begin position="106"/>
        <end position="112"/>
    </location>
</feature>
<feature type="region of interest" description="Lon protease binding" evidence="1">
    <location>
        <begin position="162"/>
        <end position="169"/>
    </location>
</feature>
<feature type="site" description="Essential for degradation by Lon protease" evidence="1">
    <location>
        <position position="169"/>
    </location>
</feature>
<comment type="function">
    <text evidence="1">Component of the SOS system and an inhibitor of cell division. Accumulation of SulA causes rapid cessation of cell division and the appearance of long, non-septate filaments. In the presence of GTP, binds a polymerization-competent form of FtsZ in a 1:1 ratio, thus inhibiting FtsZ polymerization and therefore preventing it from participating in the assembly of the Z ring. This mechanism prevents the premature segregation of damaged DNA to daughter cells during cell division.</text>
</comment>
<comment type="subunit">
    <text evidence="1">Interacts with FtsZ.</text>
</comment>
<comment type="induction">
    <text evidence="1">By DNA damage, as part of the SOS response.</text>
</comment>
<comment type="PTM">
    <text evidence="1">Is rapidly cleaved and degraded by the Lon protease once DNA damage is repaired.</text>
</comment>
<comment type="similarity">
    <text evidence="1">Belongs to the SulA family.</text>
</comment>
<reference key="1">
    <citation type="journal article" date="2009" name="PLoS Genet.">
        <title>Organised genome dynamics in the Escherichia coli species results in highly diverse adaptive paths.</title>
        <authorList>
            <person name="Touchon M."/>
            <person name="Hoede C."/>
            <person name="Tenaillon O."/>
            <person name="Barbe V."/>
            <person name="Baeriswyl S."/>
            <person name="Bidet P."/>
            <person name="Bingen E."/>
            <person name="Bonacorsi S."/>
            <person name="Bouchier C."/>
            <person name="Bouvet O."/>
            <person name="Calteau A."/>
            <person name="Chiapello H."/>
            <person name="Clermont O."/>
            <person name="Cruveiller S."/>
            <person name="Danchin A."/>
            <person name="Diard M."/>
            <person name="Dossat C."/>
            <person name="Karoui M.E."/>
            <person name="Frapy E."/>
            <person name="Garry L."/>
            <person name="Ghigo J.M."/>
            <person name="Gilles A.M."/>
            <person name="Johnson J."/>
            <person name="Le Bouguenec C."/>
            <person name="Lescat M."/>
            <person name="Mangenot S."/>
            <person name="Martinez-Jehanne V."/>
            <person name="Matic I."/>
            <person name="Nassif X."/>
            <person name="Oztas S."/>
            <person name="Petit M.A."/>
            <person name="Pichon C."/>
            <person name="Rouy Z."/>
            <person name="Ruf C.S."/>
            <person name="Schneider D."/>
            <person name="Tourret J."/>
            <person name="Vacherie B."/>
            <person name="Vallenet D."/>
            <person name="Medigue C."/>
            <person name="Rocha E.P.C."/>
            <person name="Denamur E."/>
        </authorList>
    </citation>
    <scope>NUCLEOTIDE SEQUENCE [LARGE SCALE GENOMIC DNA]</scope>
    <source>
        <strain>IAI39 / ExPEC</strain>
    </source>
</reference>
<name>SULA_ECO7I</name>
<organism>
    <name type="scientific">Escherichia coli O7:K1 (strain IAI39 / ExPEC)</name>
    <dbReference type="NCBI Taxonomy" id="585057"/>
    <lineage>
        <taxon>Bacteria</taxon>
        <taxon>Pseudomonadati</taxon>
        <taxon>Pseudomonadota</taxon>
        <taxon>Gammaproteobacteria</taxon>
        <taxon>Enterobacterales</taxon>
        <taxon>Enterobacteriaceae</taxon>
        <taxon>Escherichia</taxon>
    </lineage>
</organism>
<protein>
    <recommendedName>
        <fullName evidence="1">Cell division inhibitor SulA</fullName>
    </recommendedName>
</protein>
<keyword id="KW-0131">Cell cycle</keyword>
<keyword id="KW-0132">Cell division</keyword>
<keyword id="KW-0227">DNA damage</keyword>
<keyword id="KW-0717">Septation</keyword>
<keyword id="KW-0742">SOS response</keyword>
<sequence>MYTSGYAHRASSFSSAASKIVRVSTENTTAGLISEVVYREDQPMMTQLLLLPLLQQLGQQSRWQLWLTPQQKLSREWVQASGLPLTKVMQISQLSPCHTVESMVRALRTGNYSVVIGWLADDLTEEEHAELVDAANEGNAMGFIMRPVSASSHATRQLSGLKIHSNLYH</sequence>
<evidence type="ECO:0000255" key="1">
    <source>
        <dbReference type="HAMAP-Rule" id="MF_01179"/>
    </source>
</evidence>
<dbReference type="EMBL" id="CU928164">
    <property type="protein sequence ID" value="CAR18315.1"/>
    <property type="molecule type" value="Genomic_DNA"/>
</dbReference>
<dbReference type="RefSeq" id="WP_000288692.1">
    <property type="nucleotide sequence ID" value="NC_011750.1"/>
</dbReference>
<dbReference type="RefSeq" id="YP_002408151.1">
    <property type="nucleotide sequence ID" value="NC_011750.1"/>
</dbReference>
<dbReference type="SMR" id="B7NM15"/>
<dbReference type="STRING" id="585057.ECIAI39_2188"/>
<dbReference type="KEGG" id="ect:ECIAI39_2188"/>
<dbReference type="PATRIC" id="fig|585057.6.peg.2279"/>
<dbReference type="HOGENOM" id="CLU_118972_1_0_6"/>
<dbReference type="Proteomes" id="UP000000749">
    <property type="component" value="Chromosome"/>
</dbReference>
<dbReference type="GO" id="GO:0000917">
    <property type="term" value="P:division septum assembly"/>
    <property type="evidence" value="ECO:0007669"/>
    <property type="project" value="UniProtKB-KW"/>
</dbReference>
<dbReference type="GO" id="GO:0006281">
    <property type="term" value="P:DNA repair"/>
    <property type="evidence" value="ECO:0007669"/>
    <property type="project" value="TreeGrafter"/>
</dbReference>
<dbReference type="GO" id="GO:0051782">
    <property type="term" value="P:negative regulation of cell division"/>
    <property type="evidence" value="ECO:0007669"/>
    <property type="project" value="UniProtKB-UniRule"/>
</dbReference>
<dbReference type="GO" id="GO:0009432">
    <property type="term" value="P:SOS response"/>
    <property type="evidence" value="ECO:0007669"/>
    <property type="project" value="UniProtKB-UniRule"/>
</dbReference>
<dbReference type="FunFam" id="3.40.50.300:FF:000417">
    <property type="entry name" value="Cell division inhibitor SulA"/>
    <property type="match status" value="1"/>
</dbReference>
<dbReference type="Gene3D" id="3.40.50.300">
    <property type="entry name" value="P-loop containing nucleotide triphosphate hydrolases"/>
    <property type="match status" value="1"/>
</dbReference>
<dbReference type="HAMAP" id="MF_01179">
    <property type="entry name" value="SulA"/>
    <property type="match status" value="1"/>
</dbReference>
<dbReference type="InterPro" id="IPR004596">
    <property type="entry name" value="Cell_div_suppressor_SulA"/>
</dbReference>
<dbReference type="InterPro" id="IPR027417">
    <property type="entry name" value="P-loop_NTPase"/>
</dbReference>
<dbReference type="InterPro" id="IPR050356">
    <property type="entry name" value="SulA_CellDiv_inhibitor"/>
</dbReference>
<dbReference type="InterPro" id="IPR047696">
    <property type="entry name" value="SulA_enterobact"/>
</dbReference>
<dbReference type="NCBIfam" id="NF007892">
    <property type="entry name" value="PRK10595.1"/>
    <property type="match status" value="1"/>
</dbReference>
<dbReference type="NCBIfam" id="TIGR00623">
    <property type="entry name" value="SOS_SulA_coli"/>
    <property type="match status" value="1"/>
</dbReference>
<dbReference type="PANTHER" id="PTHR35369">
    <property type="entry name" value="BLR3025 PROTEIN-RELATED"/>
    <property type="match status" value="1"/>
</dbReference>
<dbReference type="PANTHER" id="PTHR35369:SF4">
    <property type="entry name" value="CELL DIVISION INHIBITOR SULA"/>
    <property type="match status" value="1"/>
</dbReference>
<dbReference type="Pfam" id="PF03846">
    <property type="entry name" value="SulA"/>
    <property type="match status" value="1"/>
</dbReference>
<dbReference type="PIRSF" id="PIRSF003093">
    <property type="entry name" value="SulA"/>
    <property type="match status" value="1"/>
</dbReference>
<dbReference type="SUPFAM" id="SSF52540">
    <property type="entry name" value="P-loop containing nucleoside triphosphate hydrolases"/>
    <property type="match status" value="1"/>
</dbReference>
<gene>
    <name evidence="1" type="primary">sulA</name>
    <name type="ordered locus">ECIAI39_2188</name>
</gene>
<proteinExistence type="inferred from homology"/>